<proteinExistence type="inferred from homology"/>
<protein>
    <recommendedName>
        <fullName evidence="1">Chromophore lyase CpcS/CpeS 1</fullName>
        <ecNumber evidence="1">4.-.-.-</ecNumber>
    </recommendedName>
</protein>
<comment type="function">
    <text evidence="1">Covalently attaches a chromophore to Cys residue(s) of phycobiliproteins.</text>
</comment>
<comment type="similarity">
    <text evidence="1">Belongs to the CpcS/CpeS biliprotein lyase family.</text>
</comment>
<evidence type="ECO:0000255" key="1">
    <source>
        <dbReference type="HAMAP-Rule" id="MF_01459"/>
    </source>
</evidence>
<feature type="chain" id="PRO_0000403146" description="Chromophore lyase CpcS/CpeS 1">
    <location>
        <begin position="1"/>
        <end position="174"/>
    </location>
</feature>
<sequence>MNIIDFFELSAGEWFSQRTIHNLVSGELQAGKSEVNVEILEKTDPTLINLCEQNQVDSSVTKLIGVKISWNGTNNKGQVKDVGSRMLIIIPNFDDLNQGQLLQNRGNGNSPKISGRYIMGSDDVLMLTTESEGLYVEERFWYLIPNLRLRTSVVNRPQGFSLASFCSEIRRVKS</sequence>
<accession>Q10ZK3</accession>
<reference key="1">
    <citation type="journal article" date="2015" name="Proc. Natl. Acad. Sci. U.S.A.">
        <title>Trichodesmium genome maintains abundant, widespread noncoding DNA in situ, despite oligotrophic lifestyle.</title>
        <authorList>
            <person name="Walworth N."/>
            <person name="Pfreundt U."/>
            <person name="Nelson W.C."/>
            <person name="Mincer T."/>
            <person name="Heidelberg J.F."/>
            <person name="Fu F."/>
            <person name="Waterbury J.B."/>
            <person name="Glavina del Rio T."/>
            <person name="Goodwin L."/>
            <person name="Kyrpides N.C."/>
            <person name="Land M.L."/>
            <person name="Woyke T."/>
            <person name="Hutchins D.A."/>
            <person name="Hess W.R."/>
            <person name="Webb E.A."/>
        </authorList>
    </citation>
    <scope>NUCLEOTIDE SEQUENCE [LARGE SCALE GENOMIC DNA]</scope>
    <source>
        <strain>IMS101</strain>
    </source>
</reference>
<gene>
    <name evidence="1" type="primary">cpcS1</name>
    <name type="ordered locus">Tery_3198</name>
</gene>
<keyword id="KW-0456">Lyase</keyword>
<name>CPXS1_TRIEI</name>
<dbReference type="EC" id="4.-.-.-" evidence="1"/>
<dbReference type="EMBL" id="CP000393">
    <property type="protein sequence ID" value="ABG52321.1"/>
    <property type="molecule type" value="Genomic_DNA"/>
</dbReference>
<dbReference type="RefSeq" id="WP_011612666.1">
    <property type="nucleotide sequence ID" value="NC_008312.1"/>
</dbReference>
<dbReference type="SMR" id="Q10ZK3"/>
<dbReference type="STRING" id="203124.Tery_3198"/>
<dbReference type="KEGG" id="ter:Tery_3198"/>
<dbReference type="eggNOG" id="ENOG50304XR">
    <property type="taxonomic scope" value="Bacteria"/>
</dbReference>
<dbReference type="HOGENOM" id="CLU_096258_0_0_3"/>
<dbReference type="OrthoDB" id="554080at2"/>
<dbReference type="GO" id="GO:0016829">
    <property type="term" value="F:lyase activity"/>
    <property type="evidence" value="ECO:0007669"/>
    <property type="project" value="UniProtKB-KW"/>
</dbReference>
<dbReference type="CDD" id="cd19433">
    <property type="entry name" value="lipocalin_CpcS-CpeS"/>
    <property type="match status" value="1"/>
</dbReference>
<dbReference type="Gene3D" id="2.40.128.20">
    <property type="match status" value="1"/>
</dbReference>
<dbReference type="HAMAP" id="MF_01459">
    <property type="entry name" value="Chrphore_lyase_CpxS"/>
    <property type="match status" value="1"/>
</dbReference>
<dbReference type="InterPro" id="IPR012674">
    <property type="entry name" value="Calycin"/>
</dbReference>
<dbReference type="InterPro" id="IPR018536">
    <property type="entry name" value="CpcS/CpeS"/>
</dbReference>
<dbReference type="Pfam" id="PF09367">
    <property type="entry name" value="CpeS"/>
    <property type="match status" value="1"/>
</dbReference>
<organism>
    <name type="scientific">Trichodesmium erythraeum (strain IMS101)</name>
    <dbReference type="NCBI Taxonomy" id="203124"/>
    <lineage>
        <taxon>Bacteria</taxon>
        <taxon>Bacillati</taxon>
        <taxon>Cyanobacteriota</taxon>
        <taxon>Cyanophyceae</taxon>
        <taxon>Oscillatoriophycideae</taxon>
        <taxon>Oscillatoriales</taxon>
        <taxon>Microcoleaceae</taxon>
        <taxon>Trichodesmium</taxon>
    </lineage>
</organism>